<evidence type="ECO:0000255" key="1">
    <source>
        <dbReference type="HAMAP-Rule" id="MF_00697"/>
    </source>
</evidence>
<name>Y4400_RHIWR</name>
<protein>
    <recommendedName>
        <fullName evidence="1">UPF0276 protein Swit_4400</fullName>
    </recommendedName>
</protein>
<keyword id="KW-1185">Reference proteome</keyword>
<sequence>MSGMSRSLFGLGLRKPHYGDFLDGDAPVAVDFVEVISENFMVPGGRPRDVLRRVRERHPVALHGVSMSVGSADGIDRDYLARLRLLADEVDPLFVSDHLCWTRIEGFNAHDLLPLPYTEEALDVVCANIAIAQDVLGRAMLIENPSSYVAFDAPMTEWEFLDAMCARTGCGLLLDVNNIYVSASNHGFDAQAYLAGIPADRVAQIHLAGHSQGRTLLIDTHDRPVPPPVWALYEAAIAKLGPVATMIERDDDIPPLAELIDELQVARDMANAHMRRAA</sequence>
<gene>
    <name type="ordered locus">Swit_4400</name>
</gene>
<dbReference type="EMBL" id="CP000699">
    <property type="protein sequence ID" value="ABQ70738.1"/>
    <property type="molecule type" value="Genomic_DNA"/>
</dbReference>
<dbReference type="SMR" id="A5VEM2"/>
<dbReference type="STRING" id="392499.Swit_4400"/>
<dbReference type="PaxDb" id="392499-Swit_4400"/>
<dbReference type="KEGG" id="swi:Swit_4400"/>
<dbReference type="eggNOG" id="COG3220">
    <property type="taxonomic scope" value="Bacteria"/>
</dbReference>
<dbReference type="HOGENOM" id="CLU_064263_0_0_5"/>
<dbReference type="OrthoDB" id="9763101at2"/>
<dbReference type="Proteomes" id="UP000001989">
    <property type="component" value="Chromosome"/>
</dbReference>
<dbReference type="Gene3D" id="3.20.20.150">
    <property type="entry name" value="Divalent-metal-dependent TIM barrel enzymes"/>
    <property type="match status" value="1"/>
</dbReference>
<dbReference type="HAMAP" id="MF_00697">
    <property type="entry name" value="UPF0276"/>
    <property type="match status" value="1"/>
</dbReference>
<dbReference type="InterPro" id="IPR007801">
    <property type="entry name" value="MbnB/TglH/ChrH"/>
</dbReference>
<dbReference type="InterPro" id="IPR036237">
    <property type="entry name" value="Xyl_isomerase-like_sf"/>
</dbReference>
<dbReference type="NCBIfam" id="NF003818">
    <property type="entry name" value="PRK05409.1"/>
    <property type="match status" value="1"/>
</dbReference>
<dbReference type="PANTHER" id="PTHR42194">
    <property type="entry name" value="UPF0276 PROTEIN HI_1600"/>
    <property type="match status" value="1"/>
</dbReference>
<dbReference type="PANTHER" id="PTHR42194:SF1">
    <property type="entry name" value="UPF0276 PROTEIN HI_1600"/>
    <property type="match status" value="1"/>
</dbReference>
<dbReference type="Pfam" id="PF05114">
    <property type="entry name" value="MbnB_TglH_ChrH"/>
    <property type="match status" value="1"/>
</dbReference>
<dbReference type="SUPFAM" id="SSF51658">
    <property type="entry name" value="Xylose isomerase-like"/>
    <property type="match status" value="1"/>
</dbReference>
<accession>A5VEM2</accession>
<reference key="1">
    <citation type="journal article" date="2010" name="J. Bacteriol.">
        <title>Genome sequence of the dioxin-mineralizing bacterium Sphingomonas wittichii RW1.</title>
        <authorList>
            <person name="Miller T.R."/>
            <person name="Delcher A.L."/>
            <person name="Salzberg S.L."/>
            <person name="Saunders E."/>
            <person name="Detter J.C."/>
            <person name="Halden R.U."/>
        </authorList>
    </citation>
    <scope>NUCLEOTIDE SEQUENCE [LARGE SCALE GENOMIC DNA]</scope>
    <source>
        <strain>DSM 6014 / CCUG 31198 / JCM 15750 / NBRC 105917 / EY 4224 / RW1</strain>
    </source>
</reference>
<feature type="chain" id="PRO_1000045477" description="UPF0276 protein Swit_4400">
    <location>
        <begin position="1"/>
        <end position="278"/>
    </location>
</feature>
<proteinExistence type="inferred from homology"/>
<organism>
    <name type="scientific">Rhizorhabdus wittichii (strain DSM 6014 / CCUG 31198 / JCM 15750 / NBRC 105917 / EY 4224 / RW1)</name>
    <name type="common">Sphingomonas wittichii</name>
    <dbReference type="NCBI Taxonomy" id="392499"/>
    <lineage>
        <taxon>Bacteria</taxon>
        <taxon>Pseudomonadati</taxon>
        <taxon>Pseudomonadota</taxon>
        <taxon>Alphaproteobacteria</taxon>
        <taxon>Sphingomonadales</taxon>
        <taxon>Sphingomonadaceae</taxon>
        <taxon>Rhizorhabdus</taxon>
    </lineage>
</organism>
<comment type="similarity">
    <text evidence="1">Belongs to the UPF0276 family.</text>
</comment>